<protein>
    <recommendedName>
        <fullName>Probable multifunctional siroheme biosynthesis protein HemA</fullName>
    </recommendedName>
    <domain>
        <recommendedName>
            <fullName evidence="2">Glutamyl-tRNA reductase</fullName>
            <shortName evidence="2">GluTR</shortName>
            <ecNumber evidence="2">1.2.1.70</ecNumber>
        </recommendedName>
    </domain>
    <domain>
        <recommendedName>
            <fullName>Precorrin-2 dehydrogenase</fullName>
            <ecNumber>1.3.1.76</ecNumber>
        </recommendedName>
    </domain>
    <domain>
        <recommendedName>
            <fullName>Sirohydrochlorin ferrochelatase</fullName>
            <ecNumber>4.99.1.4</ecNumber>
        </recommendedName>
    </domain>
</protein>
<gene>
    <name evidence="2" type="primary">hemA</name>
</gene>
<keyword id="KW-0169">Cobalamin biosynthesis</keyword>
<keyword id="KW-0456">Lyase</keyword>
<keyword id="KW-0511">Multifunctional enzyme</keyword>
<keyword id="KW-0520">NAD</keyword>
<keyword id="KW-0521">NADP</keyword>
<keyword id="KW-0560">Oxidoreductase</keyword>
<keyword id="KW-0627">Porphyrin biosynthesis</keyword>
<feature type="chain" id="PRO_0000114012" description="Probable multifunctional siroheme biosynthesis protein HemA">
    <location>
        <begin position="1"/>
        <end position="515"/>
    </location>
</feature>
<feature type="region of interest" description="Glutamyl-tRNA reductase">
    <location>
        <begin position="26"/>
        <end position="174"/>
    </location>
</feature>
<feature type="region of interest" description="Precorrin-2 dehydrogenase /sirohydrochlorin ferrochelatase">
    <location>
        <begin position="367"/>
        <end position="507"/>
    </location>
</feature>
<feature type="active site" description="Nucleophile" evidence="2">
    <location>
        <position position="69"/>
    </location>
</feature>
<feature type="binding site" evidence="1">
    <location>
        <begin position="26"/>
        <end position="27"/>
    </location>
    <ligand>
        <name>NAD(+)</name>
        <dbReference type="ChEBI" id="CHEBI:57540"/>
    </ligand>
</feature>
<feature type="binding site" evidence="1">
    <location>
        <begin position="47"/>
        <end position="48"/>
    </location>
    <ligand>
        <name>NAD(+)</name>
        <dbReference type="ChEBI" id="CHEBI:57540"/>
    </ligand>
</feature>
<feature type="binding site" evidence="1">
    <location>
        <begin position="68"/>
        <end position="71"/>
    </location>
    <ligand>
        <name>L-glutamyl-tRNA(Glu)</name>
        <dbReference type="ChEBI" id="CHEBI:29157"/>
    </ligand>
</feature>
<feature type="binding site" evidence="1">
    <location>
        <position position="127"/>
    </location>
    <ligand>
        <name>L-glutamyl-tRNA(Glu)</name>
        <dbReference type="ChEBI" id="CHEBI:29157"/>
    </ligand>
</feature>
<feature type="binding site" evidence="1">
    <location>
        <position position="132"/>
    </location>
    <ligand>
        <name>L-glutamyl-tRNA(Glu)</name>
        <dbReference type="ChEBI" id="CHEBI:29157"/>
    </ligand>
</feature>
<feature type="binding site" evidence="1">
    <location>
        <position position="138"/>
    </location>
    <ligand>
        <name>L-glutamyl-tRNA(Glu)</name>
        <dbReference type="ChEBI" id="CHEBI:29157"/>
    </ligand>
</feature>
<feature type="binding site" evidence="2">
    <location>
        <begin position="206"/>
        <end position="211"/>
    </location>
    <ligand>
        <name>NADP(+)</name>
        <dbReference type="ChEBI" id="CHEBI:58349"/>
    </ligand>
</feature>
<feature type="site" description="Important for activity" evidence="2">
    <location>
        <position position="117"/>
    </location>
</feature>
<organism>
    <name type="scientific">Ruminiclostridium josui</name>
    <name type="common">Clostridium josui</name>
    <dbReference type="NCBI Taxonomy" id="1499"/>
    <lineage>
        <taxon>Bacteria</taxon>
        <taxon>Bacillati</taxon>
        <taxon>Bacillota</taxon>
        <taxon>Clostridia</taxon>
        <taxon>Eubacteriales</taxon>
        <taxon>Oscillospiraceae</taxon>
        <taxon>Ruminiclostridium</taxon>
    </lineage>
</organism>
<accession>Q59292</accession>
<evidence type="ECO:0000250" key="1"/>
<evidence type="ECO:0000255" key="2">
    <source>
        <dbReference type="HAMAP-Rule" id="MF_00087"/>
    </source>
</evidence>
<evidence type="ECO:0000305" key="3"/>
<evidence type="ECO:0000305" key="4">
    <source>
    </source>
</evidence>
<dbReference type="EC" id="1.2.1.70" evidence="2"/>
<dbReference type="EC" id="1.3.1.76"/>
<dbReference type="EC" id="4.99.1.4"/>
<dbReference type="EMBL" id="D28503">
    <property type="protein sequence ID" value="BAA05860.1"/>
    <property type="molecule type" value="Genomic_DNA"/>
</dbReference>
<dbReference type="PIR" id="I40809">
    <property type="entry name" value="I40809"/>
</dbReference>
<dbReference type="SMR" id="Q59292"/>
<dbReference type="UniPathway" id="UPA00148">
    <property type="reaction ID" value="UER00222"/>
</dbReference>
<dbReference type="UniPathway" id="UPA00251">
    <property type="reaction ID" value="UER00316"/>
</dbReference>
<dbReference type="UniPathway" id="UPA00262">
    <property type="reaction ID" value="UER00222"/>
</dbReference>
<dbReference type="UniPathway" id="UPA00262">
    <property type="reaction ID" value="UER00376"/>
</dbReference>
<dbReference type="GO" id="GO:0008883">
    <property type="term" value="F:glutamyl-tRNA reductase activity"/>
    <property type="evidence" value="ECO:0007669"/>
    <property type="project" value="UniProtKB-UniRule"/>
</dbReference>
<dbReference type="GO" id="GO:0050661">
    <property type="term" value="F:NADP binding"/>
    <property type="evidence" value="ECO:0007669"/>
    <property type="project" value="InterPro"/>
</dbReference>
<dbReference type="GO" id="GO:0043115">
    <property type="term" value="F:precorrin-2 dehydrogenase activity"/>
    <property type="evidence" value="ECO:0007669"/>
    <property type="project" value="UniProtKB-EC"/>
</dbReference>
<dbReference type="GO" id="GO:0051266">
    <property type="term" value="F:sirohydrochlorin ferrochelatase activity"/>
    <property type="evidence" value="ECO:0007669"/>
    <property type="project" value="UniProtKB-EC"/>
</dbReference>
<dbReference type="GO" id="GO:0009236">
    <property type="term" value="P:cobalamin biosynthetic process"/>
    <property type="evidence" value="ECO:0007669"/>
    <property type="project" value="UniProtKB-UniPathway"/>
</dbReference>
<dbReference type="GO" id="GO:0019353">
    <property type="term" value="P:protoporphyrinogen IX biosynthetic process from glutamate"/>
    <property type="evidence" value="ECO:0007669"/>
    <property type="project" value="TreeGrafter"/>
</dbReference>
<dbReference type="GO" id="GO:0019354">
    <property type="term" value="P:siroheme biosynthetic process"/>
    <property type="evidence" value="ECO:0007669"/>
    <property type="project" value="UniProtKB-UniPathway"/>
</dbReference>
<dbReference type="CDD" id="cd05213">
    <property type="entry name" value="NAD_bind_Glutamyl_tRNA_reduct"/>
    <property type="match status" value="1"/>
</dbReference>
<dbReference type="FunFam" id="3.30.460.30:FF:000001">
    <property type="entry name" value="Glutamyl-tRNA reductase"/>
    <property type="match status" value="1"/>
</dbReference>
<dbReference type="Gene3D" id="3.30.460.30">
    <property type="entry name" value="Glutamyl-tRNA reductase, N-terminal domain"/>
    <property type="match status" value="1"/>
</dbReference>
<dbReference type="Gene3D" id="3.40.50.720">
    <property type="entry name" value="NAD(P)-binding Rossmann-like Domain"/>
    <property type="match status" value="2"/>
</dbReference>
<dbReference type="HAMAP" id="MF_00087">
    <property type="entry name" value="Glu_tRNA_reductase"/>
    <property type="match status" value="1"/>
</dbReference>
<dbReference type="InterPro" id="IPR000343">
    <property type="entry name" value="4pyrrol_synth_GluRdtase"/>
</dbReference>
<dbReference type="InterPro" id="IPR015895">
    <property type="entry name" value="4pyrrol_synth_GluRdtase_N"/>
</dbReference>
<dbReference type="InterPro" id="IPR018214">
    <property type="entry name" value="GluRdtase_CS"/>
</dbReference>
<dbReference type="InterPro" id="IPR036343">
    <property type="entry name" value="GluRdtase_N_sf"/>
</dbReference>
<dbReference type="InterPro" id="IPR036291">
    <property type="entry name" value="NAD(P)-bd_dom_sf"/>
</dbReference>
<dbReference type="InterPro" id="IPR006151">
    <property type="entry name" value="Shikm_DH/Glu-tRNA_Rdtase"/>
</dbReference>
<dbReference type="InterPro" id="IPR006367">
    <property type="entry name" value="Sirohaem_synthase_N"/>
</dbReference>
<dbReference type="NCBIfam" id="TIGR01470">
    <property type="entry name" value="cysG_Nterm"/>
    <property type="match status" value="1"/>
</dbReference>
<dbReference type="NCBIfam" id="TIGR01035">
    <property type="entry name" value="hemA"/>
    <property type="match status" value="1"/>
</dbReference>
<dbReference type="PANTHER" id="PTHR43013">
    <property type="entry name" value="GLUTAMYL-TRNA REDUCTASE"/>
    <property type="match status" value="1"/>
</dbReference>
<dbReference type="PANTHER" id="PTHR43013:SF1">
    <property type="entry name" value="GLUTAMYL-TRNA REDUCTASE"/>
    <property type="match status" value="1"/>
</dbReference>
<dbReference type="Pfam" id="PF05201">
    <property type="entry name" value="GlutR_N"/>
    <property type="match status" value="1"/>
</dbReference>
<dbReference type="Pfam" id="PF13241">
    <property type="entry name" value="NAD_binding_7"/>
    <property type="match status" value="1"/>
</dbReference>
<dbReference type="Pfam" id="PF01488">
    <property type="entry name" value="Shikimate_DH"/>
    <property type="match status" value="1"/>
</dbReference>
<dbReference type="PRINTS" id="PR00411">
    <property type="entry name" value="PNDRDTASEI"/>
</dbReference>
<dbReference type="SUPFAM" id="SSF69742">
    <property type="entry name" value="Glutamyl tRNA-reductase catalytic, N-terminal domain"/>
    <property type="match status" value="1"/>
</dbReference>
<dbReference type="SUPFAM" id="SSF51735">
    <property type="entry name" value="NAD(P)-binding Rossmann-fold domains"/>
    <property type="match status" value="2"/>
</dbReference>
<dbReference type="PROSITE" id="PS00747">
    <property type="entry name" value="GLUTR"/>
    <property type="match status" value="1"/>
</dbReference>
<reference key="1">
    <citation type="journal article" date="1995" name="J. Bacteriol.">
        <title>Cloning and sequencing of some genes responsible for porphyrin biosynthesis from the anaerobic bacterium Clostridium josui.</title>
        <authorList>
            <person name="Fujino E."/>
            <person name="Fujino T."/>
            <person name="Karita S."/>
            <person name="Sakka K."/>
            <person name="Ohmiya K."/>
        </authorList>
    </citation>
    <scope>NUCLEOTIDE SEQUENCE [GENOMIC DNA]</scope>
    <scope>FUNCTION</scope>
    <source>
        <strain>DSM 25723 / FERM P-9684 / JCM 17888 / KCTC 15379 / III</strain>
    </source>
</reference>
<comment type="function">
    <text evidence="4">Multifunctional enzyme that catalyzes the NADPH-dependent reduction of glutamyl-tRNA(Glu) to glutamate 1-semialdehyde (GSA), the NAD-dependent ring dehydrogenation of precorrin-2 to sirohydrochlorin and finally, the ferrochelation of sirohydrochlorin to yield siroheme.</text>
</comment>
<comment type="catalytic activity">
    <reaction evidence="2">
        <text>(S)-4-amino-5-oxopentanoate + tRNA(Glu) + NADP(+) = L-glutamyl-tRNA(Glu) + NADPH + H(+)</text>
        <dbReference type="Rhea" id="RHEA:12344"/>
        <dbReference type="Rhea" id="RHEA-COMP:9663"/>
        <dbReference type="Rhea" id="RHEA-COMP:9680"/>
        <dbReference type="ChEBI" id="CHEBI:15378"/>
        <dbReference type="ChEBI" id="CHEBI:57501"/>
        <dbReference type="ChEBI" id="CHEBI:57783"/>
        <dbReference type="ChEBI" id="CHEBI:58349"/>
        <dbReference type="ChEBI" id="CHEBI:78442"/>
        <dbReference type="ChEBI" id="CHEBI:78520"/>
        <dbReference type="EC" id="1.2.1.70"/>
    </reaction>
</comment>
<comment type="catalytic activity">
    <reaction>
        <text>precorrin-2 + NAD(+) = sirohydrochlorin + NADH + 2 H(+)</text>
        <dbReference type="Rhea" id="RHEA:15613"/>
        <dbReference type="ChEBI" id="CHEBI:15378"/>
        <dbReference type="ChEBI" id="CHEBI:57540"/>
        <dbReference type="ChEBI" id="CHEBI:57945"/>
        <dbReference type="ChEBI" id="CHEBI:58351"/>
        <dbReference type="ChEBI" id="CHEBI:58827"/>
        <dbReference type="EC" id="1.3.1.76"/>
    </reaction>
</comment>
<comment type="catalytic activity">
    <reaction>
        <text>siroheme + 2 H(+) = sirohydrochlorin + Fe(2+)</text>
        <dbReference type="Rhea" id="RHEA:24360"/>
        <dbReference type="ChEBI" id="CHEBI:15378"/>
        <dbReference type="ChEBI" id="CHEBI:29033"/>
        <dbReference type="ChEBI" id="CHEBI:58351"/>
        <dbReference type="ChEBI" id="CHEBI:60052"/>
        <dbReference type="EC" id="4.99.1.4"/>
    </reaction>
</comment>
<comment type="pathway">
    <text>Cofactor biosynthesis; adenosylcobalamin biosynthesis; sirohydrochlorin from precorrin-2: step 1/1.</text>
</comment>
<comment type="pathway">
    <text>Porphyrin-containing compound metabolism; siroheme biosynthesis; siroheme from sirohydrochlorin: step 1/1.</text>
</comment>
<comment type="pathway">
    <text>Porphyrin-containing compound metabolism; siroheme biosynthesis; sirohydrochlorin from precorrin-2: step 1/1.</text>
</comment>
<comment type="pathway">
    <text evidence="2">Porphyrin-containing compound metabolism; protoporphyrin-IX biosynthesis; 5-aminolevulinate from L-glutamyl-tRNA(Glu): step 1/2.</text>
</comment>
<comment type="subunit">
    <text evidence="2">Homodimer.</text>
</comment>
<comment type="domain">
    <text evidence="2">Possesses an unusual extended V-shaped dimeric structure with each monomer consisting of three distinct domains arranged along a curved 'spinal' alpha-helix. The N-terminal catalytic domain specifically recognizes the glutamate moiety of the substrate. The second domain is the NADPH-binding domain, and the third C-terminal domain is responsible for dimerization.</text>
</comment>
<comment type="miscellaneous">
    <text evidence="2">During catalysis, the active site Cys acts as a nucleophile attacking the alpha-carbonyl group of tRNA-bound glutamate with the formation of a thioester intermediate between enzyme and glutamate, and the concomitant release of tRNA(Glu). The thioester intermediate is finally reduced by direct hydride transfer from NADPH, to form the product GSA.</text>
</comment>
<comment type="similarity">
    <text evidence="3">In the N-terminal section; belongs to the glutamyl-tRNA reductase family.</text>
</comment>
<comment type="similarity">
    <text evidence="3">In the C-terminal section; belongs to the precorrin-2 dehydrogenase / sirohydrochlorin ferrochelatase family.</text>
</comment>
<sequence>MQLGRHNSGSIKKRLEMYILSIISASLDYKSAAIDIRERFSYTSTRIREILRRIKAADGVSGAVLLCTCNRTELYISGDNIENMNPALLLCQLSGEEDHKSLMTLFSIRHDSEAIFHLMEVACGLQSMVLFEDRVITQVKNAAAISREEKTIDSTLETLFRLCITAAKKAKTEIKVKAVPTSAAERAITELSKKYCFTDKRILVIGNGEIGRLCCKKLIELGAEITITLRKYKHGEIIIPVGCNTIPYDEREEVLPLSDVVISATTSPHFTITYDMIEKLERKPEIFVDLALPRDIESSISNFTGVELYNLDRFYTDYSVLNQKEVSKIREIINHFILQFEKWKDYREEAAFTKIPDLHNDTLYGRFPLFIDLSGKKVLVVGGGEIATRRVKTLLRFGADIYLVAPHLTSELQEMLNCKLINYREGYYESQDIQNMFLVIAATNDRETNHKVYLDAKEKGIQMSIADCREECSFYFPAIFEFDGIVGGLVSQNGDNHSLVKSVAEQIRKIGQATD</sequence>
<name>HEMA_RUMJO</name>
<proteinExistence type="inferred from homology"/>